<evidence type="ECO:0000250" key="1"/>
<evidence type="ECO:0000250" key="2">
    <source>
        <dbReference type="UniProtKB" id="P24522"/>
    </source>
</evidence>
<evidence type="ECO:0000305" key="3"/>
<organism>
    <name type="scientific">Felis catus</name>
    <name type="common">Cat</name>
    <name type="synonym">Felis silvestris catus</name>
    <dbReference type="NCBI Taxonomy" id="9685"/>
    <lineage>
        <taxon>Eukaryota</taxon>
        <taxon>Metazoa</taxon>
        <taxon>Chordata</taxon>
        <taxon>Craniata</taxon>
        <taxon>Vertebrata</taxon>
        <taxon>Euteleostomi</taxon>
        <taxon>Mammalia</taxon>
        <taxon>Eutheria</taxon>
        <taxon>Laurasiatheria</taxon>
        <taxon>Carnivora</taxon>
        <taxon>Feliformia</taxon>
        <taxon>Felidae</taxon>
        <taxon>Felinae</taxon>
        <taxon>Felis</taxon>
    </lineage>
</organism>
<name>GA45A_FELCA</name>
<feature type="chain" id="PRO_0000228617" description="Growth arrest and DNA damage-inducible protein GADD45 alpha">
    <location>
        <begin position="1"/>
        <end position="165"/>
    </location>
</feature>
<feature type="modified residue" description="Phosphothreonine" evidence="2">
    <location>
        <position position="2"/>
    </location>
</feature>
<keyword id="KW-0131">Cell cycle</keyword>
<keyword id="KW-0227">DNA damage</keyword>
<keyword id="KW-0338">Growth arrest</keyword>
<keyword id="KW-0539">Nucleus</keyword>
<keyword id="KW-0597">Phosphoprotein</keyword>
<keyword id="KW-1185">Reference proteome</keyword>
<accession>Q60GI5</accession>
<protein>
    <recommendedName>
        <fullName>Growth arrest and DNA damage-inducible protein GADD45 alpha</fullName>
    </recommendedName>
</protein>
<dbReference type="EMBL" id="AB176962">
    <property type="protein sequence ID" value="BAD60923.1"/>
    <property type="molecule type" value="mRNA"/>
</dbReference>
<dbReference type="RefSeq" id="XP_023113581.1">
    <property type="nucleotide sequence ID" value="XM_023257813.2"/>
</dbReference>
<dbReference type="BMRB" id="Q60GI5"/>
<dbReference type="SMR" id="Q60GI5"/>
<dbReference type="STRING" id="9685.ENSFCAP00000040077"/>
<dbReference type="PaxDb" id="9685-ENSFCAP00000002754"/>
<dbReference type="Ensembl" id="ENSFCAT00000051844.2">
    <property type="protein sequence ID" value="ENSFCAP00000040077.1"/>
    <property type="gene ID" value="ENSFCAG00000002987.6"/>
</dbReference>
<dbReference type="GeneID" id="493656"/>
<dbReference type="VGNC" id="VGNC:80215">
    <property type="gene designation" value="GADD45A"/>
</dbReference>
<dbReference type="eggNOG" id="ENOG502RY8P">
    <property type="taxonomic scope" value="Eukaryota"/>
</dbReference>
<dbReference type="GeneTree" id="ENSGT00950000182964"/>
<dbReference type="HOGENOM" id="CLU_118164_0_1_1"/>
<dbReference type="InParanoid" id="Q60GI5"/>
<dbReference type="OMA" id="NELWAHR"/>
<dbReference type="OrthoDB" id="5976967at2759"/>
<dbReference type="Proteomes" id="UP000011712">
    <property type="component" value="Chromosome C1"/>
</dbReference>
<dbReference type="Bgee" id="ENSFCAG00000002987">
    <property type="expression patterns" value="Expressed in adult mammalian kidney and 10 other cell types or tissues"/>
</dbReference>
<dbReference type="GO" id="GO:0005737">
    <property type="term" value="C:cytoplasm"/>
    <property type="evidence" value="ECO:0000318"/>
    <property type="project" value="GO_Central"/>
</dbReference>
<dbReference type="GO" id="GO:0005634">
    <property type="term" value="C:nucleus"/>
    <property type="evidence" value="ECO:0000318"/>
    <property type="project" value="GO_Central"/>
</dbReference>
<dbReference type="GO" id="GO:0006974">
    <property type="term" value="P:DNA damage response"/>
    <property type="evidence" value="ECO:0007669"/>
    <property type="project" value="UniProtKB-KW"/>
</dbReference>
<dbReference type="GO" id="GO:0051726">
    <property type="term" value="P:regulation of cell cycle"/>
    <property type="evidence" value="ECO:0000318"/>
    <property type="project" value="GO_Central"/>
</dbReference>
<dbReference type="FunFam" id="3.30.1330.30:FF:000012">
    <property type="entry name" value="growth arrest and DNA damage-inducible protein GADD45 alpha"/>
    <property type="match status" value="1"/>
</dbReference>
<dbReference type="Gene3D" id="3.30.1330.30">
    <property type="match status" value="1"/>
</dbReference>
<dbReference type="InterPro" id="IPR024824">
    <property type="entry name" value="GADD45"/>
</dbReference>
<dbReference type="InterPro" id="IPR029064">
    <property type="entry name" value="Ribosomal_eL30-like_sf"/>
</dbReference>
<dbReference type="InterPro" id="IPR004038">
    <property type="entry name" value="Ribosomal_eL8/eL30/eS12/Gad45"/>
</dbReference>
<dbReference type="PANTHER" id="PTHR10411">
    <property type="entry name" value="GROWTH ARREST AND DNA DAMAGE-INDUCIBLE PROTEIN GADD45"/>
    <property type="match status" value="1"/>
</dbReference>
<dbReference type="PANTHER" id="PTHR10411:SF3">
    <property type="entry name" value="GROWTH ARREST AND DNA DAMAGE-INDUCIBLE PROTEIN GADD45 ALPHA"/>
    <property type="match status" value="1"/>
</dbReference>
<dbReference type="Pfam" id="PF01248">
    <property type="entry name" value="Ribosomal_L7Ae"/>
    <property type="match status" value="1"/>
</dbReference>
<dbReference type="SUPFAM" id="SSF55315">
    <property type="entry name" value="L30e-like"/>
    <property type="match status" value="1"/>
</dbReference>
<sequence>MTLEEFSAGEQKTERMDKVGDALEEVLSKALSQRTITVGVYEAAKLLNVDPDNVVLCLLAADEDDDRDVALQIHFTLIQAFCCENDINILRVSNPGRLAELLLLETDASPAASEGAEQPPDLHCVLVTNPHSSQWKDPALSQLICFCRESRYMDQWVPVINLPER</sequence>
<proteinExistence type="evidence at transcript level"/>
<comment type="function">
    <text evidence="1">Might affect PCNA interaction with some CDK (cell division protein kinase) complexes; stimulates DNA excision repair in vitro and inhibits entry of cells into S phase. In T-cells, functions as a regulator of p38 MAPKs by inhibiting p88 phosphorylation and activity (By similarity).</text>
</comment>
<comment type="subunit">
    <text evidence="1">Interacts with AURKA, PCNA, GADD45GIP1 and MAPK14.</text>
</comment>
<comment type="subcellular location">
    <subcellularLocation>
        <location evidence="1">Nucleus</location>
    </subcellularLocation>
</comment>
<comment type="similarity">
    <text evidence="3">Belongs to the GADD45 family.</text>
</comment>
<gene>
    <name type="primary">GADD45A</name>
</gene>
<reference key="1">
    <citation type="submission" date="2004-04" db="EMBL/GenBank/DDBJ databases">
        <title>Cloning of the feline GADD45 cDNA and detection of the alternative splicing isoform.</title>
        <authorList>
            <person name="Oikawa T."/>
            <person name="Kaneko N."/>
            <person name="Watanabe M."/>
            <person name="Itamoto K."/>
            <person name="Okuda M."/>
            <person name="Inokuma H."/>
        </authorList>
    </citation>
    <scope>NUCLEOTIDE SEQUENCE [MRNA]</scope>
</reference>